<gene>
    <name evidence="1" type="primary">atpC</name>
    <name type="ordered locus">Chy400_3286</name>
</gene>
<feature type="chain" id="PRO_1000146318" description="ATP synthase epsilon chain">
    <location>
        <begin position="1"/>
        <end position="139"/>
    </location>
</feature>
<feature type="region of interest" description="Disordered" evidence="2">
    <location>
        <begin position="89"/>
        <end position="110"/>
    </location>
</feature>
<keyword id="KW-0066">ATP synthesis</keyword>
<keyword id="KW-1003">Cell membrane</keyword>
<keyword id="KW-0139">CF(1)</keyword>
<keyword id="KW-0375">Hydrogen ion transport</keyword>
<keyword id="KW-0406">Ion transport</keyword>
<keyword id="KW-0472">Membrane</keyword>
<keyword id="KW-0813">Transport</keyword>
<reference key="1">
    <citation type="submission" date="2009-01" db="EMBL/GenBank/DDBJ databases">
        <title>Complete sequence of Chloroflexus sp. Y-400-fl.</title>
        <authorList>
            <consortium name="US DOE Joint Genome Institute"/>
            <person name="Lucas S."/>
            <person name="Copeland A."/>
            <person name="Lapidus A."/>
            <person name="Glavina del Rio T."/>
            <person name="Dalin E."/>
            <person name="Tice H."/>
            <person name="Bruce D."/>
            <person name="Goodwin L."/>
            <person name="Pitluck S."/>
            <person name="Sims D."/>
            <person name="Kiss H."/>
            <person name="Brettin T."/>
            <person name="Detter J.C."/>
            <person name="Han C."/>
            <person name="Larimer F."/>
            <person name="Land M."/>
            <person name="Hauser L."/>
            <person name="Kyrpides N."/>
            <person name="Ovchinnikova G."/>
            <person name="Bryant D.A."/>
            <person name="Richardson P."/>
        </authorList>
    </citation>
    <scope>NUCLEOTIDE SEQUENCE [LARGE SCALE GENOMIC DNA]</scope>
    <source>
        <strain>ATCC 29364 / DSM 637 / Y-400-fl</strain>
    </source>
</reference>
<dbReference type="EMBL" id="CP001364">
    <property type="protein sequence ID" value="ACM54664.1"/>
    <property type="molecule type" value="Genomic_DNA"/>
</dbReference>
<dbReference type="SMR" id="B9LBL9"/>
<dbReference type="KEGG" id="chl:Chy400_3286"/>
<dbReference type="HOGENOM" id="CLU_084338_1_3_0"/>
<dbReference type="OrthoDB" id="9804110at2"/>
<dbReference type="GO" id="GO:0005886">
    <property type="term" value="C:plasma membrane"/>
    <property type="evidence" value="ECO:0007669"/>
    <property type="project" value="UniProtKB-SubCell"/>
</dbReference>
<dbReference type="GO" id="GO:0045259">
    <property type="term" value="C:proton-transporting ATP synthase complex"/>
    <property type="evidence" value="ECO:0007669"/>
    <property type="project" value="UniProtKB-KW"/>
</dbReference>
<dbReference type="GO" id="GO:0005524">
    <property type="term" value="F:ATP binding"/>
    <property type="evidence" value="ECO:0007669"/>
    <property type="project" value="UniProtKB-UniRule"/>
</dbReference>
<dbReference type="GO" id="GO:0046933">
    <property type="term" value="F:proton-transporting ATP synthase activity, rotational mechanism"/>
    <property type="evidence" value="ECO:0007669"/>
    <property type="project" value="UniProtKB-UniRule"/>
</dbReference>
<dbReference type="CDD" id="cd12152">
    <property type="entry name" value="F1-ATPase_delta"/>
    <property type="match status" value="1"/>
</dbReference>
<dbReference type="Gene3D" id="2.60.15.10">
    <property type="entry name" value="F0F1 ATP synthase delta/epsilon subunit, N-terminal"/>
    <property type="match status" value="1"/>
</dbReference>
<dbReference type="HAMAP" id="MF_00530">
    <property type="entry name" value="ATP_synth_epsil_bac"/>
    <property type="match status" value="1"/>
</dbReference>
<dbReference type="InterPro" id="IPR036794">
    <property type="entry name" value="ATP_F1_dsu/esu_C_sf"/>
</dbReference>
<dbReference type="InterPro" id="IPR001469">
    <property type="entry name" value="ATP_synth_F1_dsu/esu"/>
</dbReference>
<dbReference type="InterPro" id="IPR020546">
    <property type="entry name" value="ATP_synth_F1_dsu/esu_N"/>
</dbReference>
<dbReference type="InterPro" id="IPR020547">
    <property type="entry name" value="ATP_synth_F1_esu_C"/>
</dbReference>
<dbReference type="InterPro" id="IPR036771">
    <property type="entry name" value="ATPsynth_dsu/esu_N"/>
</dbReference>
<dbReference type="NCBIfam" id="TIGR01216">
    <property type="entry name" value="ATP_synt_epsi"/>
    <property type="match status" value="1"/>
</dbReference>
<dbReference type="NCBIfam" id="NF009980">
    <property type="entry name" value="PRK13446.1"/>
    <property type="match status" value="1"/>
</dbReference>
<dbReference type="NCBIfam" id="NF011322">
    <property type="entry name" value="PRK14735.1"/>
    <property type="match status" value="1"/>
</dbReference>
<dbReference type="PANTHER" id="PTHR13822">
    <property type="entry name" value="ATP SYNTHASE DELTA/EPSILON CHAIN"/>
    <property type="match status" value="1"/>
</dbReference>
<dbReference type="PANTHER" id="PTHR13822:SF10">
    <property type="entry name" value="ATP SYNTHASE EPSILON CHAIN, CHLOROPLASTIC"/>
    <property type="match status" value="1"/>
</dbReference>
<dbReference type="Pfam" id="PF00401">
    <property type="entry name" value="ATP-synt_DE"/>
    <property type="match status" value="1"/>
</dbReference>
<dbReference type="Pfam" id="PF02823">
    <property type="entry name" value="ATP-synt_DE_N"/>
    <property type="match status" value="1"/>
</dbReference>
<dbReference type="SUPFAM" id="SSF46604">
    <property type="entry name" value="Epsilon subunit of F1F0-ATP synthase C-terminal domain"/>
    <property type="match status" value="1"/>
</dbReference>
<dbReference type="SUPFAM" id="SSF51344">
    <property type="entry name" value="Epsilon subunit of F1F0-ATP synthase N-terminal domain"/>
    <property type="match status" value="1"/>
</dbReference>
<evidence type="ECO:0000255" key="1">
    <source>
        <dbReference type="HAMAP-Rule" id="MF_00530"/>
    </source>
</evidence>
<evidence type="ECO:0000256" key="2">
    <source>
        <dbReference type="SAM" id="MobiDB-lite"/>
    </source>
</evidence>
<comment type="function">
    <text evidence="1">Produces ATP from ADP in the presence of a proton gradient across the membrane.</text>
</comment>
<comment type="subunit">
    <text evidence="1">F-type ATPases have 2 components, CF(1) - the catalytic core - and CF(0) - the membrane proton channel. CF(1) has five subunits: alpha(3), beta(3), gamma(1), delta(1), epsilon(1). CF(0) has three main subunits: a, b and c.</text>
</comment>
<comment type="subcellular location">
    <subcellularLocation>
        <location evidence="1">Cell membrane</location>
        <topology evidence="1">Peripheral membrane protein</topology>
    </subcellularLocation>
</comment>
<comment type="similarity">
    <text evidence="1">Belongs to the ATPase epsilon chain family.</text>
</comment>
<name>ATPE_CHLSY</name>
<accession>B9LBL9</accession>
<protein>
    <recommendedName>
        <fullName evidence="1">ATP synthase epsilon chain</fullName>
    </recommendedName>
    <alternativeName>
        <fullName evidence="1">ATP synthase F1 sector epsilon subunit</fullName>
    </alternativeName>
    <alternativeName>
        <fullName evidence="1">F-ATPase epsilon subunit</fullName>
    </alternativeName>
</protein>
<organism>
    <name type="scientific">Chloroflexus aurantiacus (strain ATCC 29364 / DSM 637 / Y-400-fl)</name>
    <dbReference type="NCBI Taxonomy" id="480224"/>
    <lineage>
        <taxon>Bacteria</taxon>
        <taxon>Bacillati</taxon>
        <taxon>Chloroflexota</taxon>
        <taxon>Chloroflexia</taxon>
        <taxon>Chloroflexales</taxon>
        <taxon>Chloroflexineae</taxon>
        <taxon>Chloroflexaceae</taxon>
        <taxon>Chloroflexus</taxon>
    </lineage>
</organism>
<proteinExistence type="inferred from homology"/>
<sequence length="139" mass="15667">MPIHLEIVTAERVILSDDVDMISAPTKDGRVGILPRHAPLMTILEPGELDIIKNGERTPFAVSGGFMEVLPHRVTILADTVERADEIDEARAEQARAEAEARRREAQSERDMALAEAKLRKEMVRLRVAQLHKIKRRQS</sequence>